<comment type="subunit">
    <text evidence="1">Part of the 30S ribosomal subunit.</text>
</comment>
<comment type="subcellular location">
    <subcellularLocation>
        <location>Plastid</location>
        <location>Chloroplast</location>
    </subcellularLocation>
</comment>
<comment type="similarity">
    <text evidence="2">Belongs to the universal ribosomal protein uS3 family.</text>
</comment>
<keyword id="KW-0150">Chloroplast</keyword>
<keyword id="KW-0934">Plastid</keyword>
<keyword id="KW-0687">Ribonucleoprotein</keyword>
<keyword id="KW-0689">Ribosomal protein</keyword>
<keyword id="KW-0694">RNA-binding</keyword>
<keyword id="KW-0699">rRNA-binding</keyword>
<sequence length="218" mass="24913">MGQKIHPLGFRLGVTQEHLSNWFARPSRYSDLLEEDEKIRNCIKEYVRTHIRNSSNYGGISRVKIQRKTDLVQVDIHTGFPALLIEGRGKGLLVLKQSVLNSISTERKLKITLSEIDKYYAEANILAEYIALQLESRVAFRRTMKKAIQLAMEQGKVKGIKIQIAGRLNGAEIARIEWAREGRVPLQTLRACIDYCHYPAQTTYGVLGIKVWIFKGEE</sequence>
<evidence type="ECO:0000250" key="1"/>
<evidence type="ECO:0000305" key="2"/>
<gene>
    <name type="primary">rps3</name>
</gene>
<feature type="chain" id="PRO_0000130306" description="Small ribosomal subunit protein uS3c">
    <location>
        <begin position="1"/>
        <end position="218"/>
    </location>
</feature>
<feature type="domain" description="KH type-2">
    <location>
        <begin position="47"/>
        <end position="117"/>
    </location>
</feature>
<proteinExistence type="inferred from homology"/>
<name>RR3_SPIMX</name>
<dbReference type="EMBL" id="AF050665">
    <property type="protein sequence ID" value="AAC95311.1"/>
    <property type="molecule type" value="Genomic_DNA"/>
</dbReference>
<dbReference type="SMR" id="O98455"/>
<dbReference type="GO" id="GO:0009507">
    <property type="term" value="C:chloroplast"/>
    <property type="evidence" value="ECO:0007669"/>
    <property type="project" value="UniProtKB-SubCell"/>
</dbReference>
<dbReference type="GO" id="GO:0022627">
    <property type="term" value="C:cytosolic small ribosomal subunit"/>
    <property type="evidence" value="ECO:0007669"/>
    <property type="project" value="TreeGrafter"/>
</dbReference>
<dbReference type="GO" id="GO:0019843">
    <property type="term" value="F:rRNA binding"/>
    <property type="evidence" value="ECO:0007669"/>
    <property type="project" value="UniProtKB-UniRule"/>
</dbReference>
<dbReference type="GO" id="GO:0003735">
    <property type="term" value="F:structural constituent of ribosome"/>
    <property type="evidence" value="ECO:0007669"/>
    <property type="project" value="InterPro"/>
</dbReference>
<dbReference type="GO" id="GO:0006412">
    <property type="term" value="P:translation"/>
    <property type="evidence" value="ECO:0007669"/>
    <property type="project" value="UniProtKB-UniRule"/>
</dbReference>
<dbReference type="CDD" id="cd02412">
    <property type="entry name" value="KH-II_30S_S3"/>
    <property type="match status" value="1"/>
</dbReference>
<dbReference type="Gene3D" id="3.30.300.20">
    <property type="match status" value="1"/>
</dbReference>
<dbReference type="Gene3D" id="3.30.1140.32">
    <property type="entry name" value="Ribosomal protein S3, C-terminal domain"/>
    <property type="match status" value="1"/>
</dbReference>
<dbReference type="HAMAP" id="MF_01309_B">
    <property type="entry name" value="Ribosomal_uS3_B"/>
    <property type="match status" value="1"/>
</dbReference>
<dbReference type="InterPro" id="IPR015946">
    <property type="entry name" value="KH_dom-like_a/b"/>
</dbReference>
<dbReference type="InterPro" id="IPR004044">
    <property type="entry name" value="KH_dom_type_2"/>
</dbReference>
<dbReference type="InterPro" id="IPR009019">
    <property type="entry name" value="KH_sf_prok-type"/>
</dbReference>
<dbReference type="InterPro" id="IPR036419">
    <property type="entry name" value="Ribosomal_S3_C_sf"/>
</dbReference>
<dbReference type="InterPro" id="IPR005704">
    <property type="entry name" value="Ribosomal_uS3_bac-typ"/>
</dbReference>
<dbReference type="InterPro" id="IPR001351">
    <property type="entry name" value="Ribosomal_uS3_C"/>
</dbReference>
<dbReference type="InterPro" id="IPR018280">
    <property type="entry name" value="Ribosomal_uS3_CS"/>
</dbReference>
<dbReference type="NCBIfam" id="TIGR01009">
    <property type="entry name" value="rpsC_bact"/>
    <property type="match status" value="1"/>
</dbReference>
<dbReference type="PANTHER" id="PTHR11760">
    <property type="entry name" value="30S/40S RIBOSOMAL PROTEIN S3"/>
    <property type="match status" value="1"/>
</dbReference>
<dbReference type="PANTHER" id="PTHR11760:SF19">
    <property type="entry name" value="SMALL RIBOSOMAL SUBUNIT PROTEIN US3C"/>
    <property type="match status" value="1"/>
</dbReference>
<dbReference type="Pfam" id="PF00189">
    <property type="entry name" value="Ribosomal_S3_C"/>
    <property type="match status" value="1"/>
</dbReference>
<dbReference type="SUPFAM" id="SSF54814">
    <property type="entry name" value="Prokaryotic type KH domain (KH-domain type II)"/>
    <property type="match status" value="1"/>
</dbReference>
<dbReference type="SUPFAM" id="SSF54821">
    <property type="entry name" value="Ribosomal protein S3 C-terminal domain"/>
    <property type="match status" value="1"/>
</dbReference>
<dbReference type="PROSITE" id="PS50823">
    <property type="entry name" value="KH_TYPE_2"/>
    <property type="match status" value="1"/>
</dbReference>
<dbReference type="PROSITE" id="PS00548">
    <property type="entry name" value="RIBOSOMAL_S3"/>
    <property type="match status" value="1"/>
</dbReference>
<protein>
    <recommendedName>
        <fullName evidence="2">Small ribosomal subunit protein uS3c</fullName>
    </recommendedName>
    <alternativeName>
        <fullName>30S ribosomal protein S3, chloroplastic</fullName>
    </alternativeName>
</protein>
<geneLocation type="chloroplast"/>
<reference key="1">
    <citation type="submission" date="1998-02" db="EMBL/GenBank/DDBJ databases">
        <title>Chloroplast rpl23 gene cluster of Spirogyra maxima (Charophyceae), shared by land plants.</title>
        <authorList>
            <person name="Lee J."/>
            <person name="Manhart J.R."/>
        </authorList>
    </citation>
    <scope>NUCLEOTIDE SEQUENCE [GENOMIC DNA]</scope>
    <source>
        <strain>UTEX LB 2495</strain>
    </source>
</reference>
<organism>
    <name type="scientific">Spirogyra maxima</name>
    <name type="common">Green alga</name>
    <dbReference type="NCBI Taxonomy" id="3180"/>
    <lineage>
        <taxon>Eukaryota</taxon>
        <taxon>Viridiplantae</taxon>
        <taxon>Streptophyta</taxon>
        <taxon>Zygnematophyceae</taxon>
        <taxon>Zygnematophycidae</taxon>
        <taxon>Zygnematales</taxon>
        <taxon>Zygnemataceae</taxon>
        <taxon>Spirogyra</taxon>
    </lineage>
</organism>
<accession>O98455</accession>